<feature type="chain" id="PRO_0000337790" description="2-keto-4-pentenoate hydratase">
    <location>
        <begin position="1"/>
        <end position="260"/>
    </location>
</feature>
<evidence type="ECO:0000255" key="1">
    <source>
        <dbReference type="HAMAP-Rule" id="MF_01655"/>
    </source>
</evidence>
<evidence type="ECO:0000269" key="2">
    <source>
    </source>
</evidence>
<evidence type="ECO:0000305" key="3"/>
<proteinExistence type="evidence at protein level"/>
<gene>
    <name evidence="1" type="primary">mhpD</name>
</gene>
<reference key="1">
    <citation type="journal article" date="1999" name="Microbiology">
        <title>Genetic organization and characteristics of the 3-(3-hydroxyphenyl)propionic acid degradation pathway of Comamonas testosteroni TA441.</title>
        <authorList>
            <person name="Arai H."/>
            <person name="Yamamoto T."/>
            <person name="Ohishi T."/>
            <person name="Shimizu T."/>
            <person name="Nakata T."/>
            <person name="Kudo T."/>
        </authorList>
    </citation>
    <scope>NUCLEOTIDE SEQUENCE [GENOMIC DNA]</scope>
    <scope>FUNCTION IN CATABOLISM OF PHENYLPROPIONIC AND CINNAMIC ACIDS</scope>
    <source>
        <strain>TA441</strain>
    </source>
</reference>
<comment type="function">
    <text evidence="1 2">Catalyzes the conversion of 2-hydroxypentadienoic acid (enolic form of 2-oxopent-4-enoate) to 4-hydroxy-2-ketopentanoic acid.</text>
</comment>
<comment type="catalytic activity">
    <reaction evidence="1">
        <text>(S)-4-hydroxy-2-oxopentanoate = (2Z)-2-hydroxypenta-2,4-dienoate + H2O</text>
        <dbReference type="Rhea" id="RHEA:22580"/>
        <dbReference type="ChEBI" id="CHEBI:15377"/>
        <dbReference type="ChEBI" id="CHEBI:67152"/>
        <dbReference type="ChEBI" id="CHEBI:73143"/>
        <dbReference type="EC" id="4.2.1.80"/>
    </reaction>
</comment>
<comment type="cofactor">
    <cofactor evidence="1">
        <name>a divalent metal cation</name>
        <dbReference type="ChEBI" id="CHEBI:60240"/>
    </cofactor>
</comment>
<comment type="pathway">
    <text evidence="1">Aromatic compound metabolism; 3-phenylpropanoate degradation.</text>
</comment>
<comment type="similarity">
    <text evidence="1">Belongs to the hydratase/decarboxylase family. MhpD subfamily.</text>
</comment>
<comment type="sequence caution" evidence="3">
    <conflict type="erroneous initiation">
        <sequence resource="EMBL-CDS" id="BAA82880"/>
    </conflict>
</comment>
<accession>Q9S156</accession>
<protein>
    <recommendedName>
        <fullName evidence="1">2-keto-4-pentenoate hydratase</fullName>
        <ecNumber evidence="1">4.2.1.80</ecNumber>
    </recommendedName>
    <alternativeName>
        <fullName evidence="1">2-hydroxypentadienoic acid hydratase</fullName>
    </alternativeName>
</protein>
<organism>
    <name type="scientific">Comamonas testosteroni</name>
    <name type="common">Pseudomonas testosteroni</name>
    <dbReference type="NCBI Taxonomy" id="285"/>
    <lineage>
        <taxon>Bacteria</taxon>
        <taxon>Pseudomonadati</taxon>
        <taxon>Pseudomonadota</taxon>
        <taxon>Betaproteobacteria</taxon>
        <taxon>Burkholderiales</taxon>
        <taxon>Comamonadaceae</taxon>
        <taxon>Comamonas</taxon>
    </lineage>
</organism>
<name>MHPD_COMTE</name>
<sequence>MPTTTQIQAWAERLRHAEATATPIAPLREEITDNDSAYAVQLVNVQYAQSQGRRIVGRKIGLTSLAVQKQLGVDQPDFGTLFADMLYGDDEAVPLSRTLQPKVEAEVALVLAKDLERPDTTLVDVISATAYVLPAIEIVGSRIADWNIRFIDTVADNASSGLVVLGAVPTALNALDLKLCQMQMTRNGDVVSTGSGGACLGHPLNAAVWLARRLANLGQPLRAGDLVLTGALGPMVAVNAGDRFEARISGIGSVCAQFEG</sequence>
<dbReference type="EC" id="4.2.1.80" evidence="1"/>
<dbReference type="EMBL" id="AB024335">
    <property type="protein sequence ID" value="BAA82880.1"/>
    <property type="status" value="ALT_INIT"/>
    <property type="molecule type" value="Genomic_DNA"/>
</dbReference>
<dbReference type="SMR" id="Q9S156"/>
<dbReference type="UniPathway" id="UPA00714"/>
<dbReference type="GO" id="GO:0005737">
    <property type="term" value="C:cytoplasm"/>
    <property type="evidence" value="ECO:0007669"/>
    <property type="project" value="TreeGrafter"/>
</dbReference>
<dbReference type="GO" id="GO:0008684">
    <property type="term" value="F:2-oxopent-4-enoate hydratase activity"/>
    <property type="evidence" value="ECO:0007669"/>
    <property type="project" value="UniProtKB-UniRule"/>
</dbReference>
<dbReference type="GO" id="GO:0030145">
    <property type="term" value="F:manganese ion binding"/>
    <property type="evidence" value="ECO:0007669"/>
    <property type="project" value="InterPro"/>
</dbReference>
<dbReference type="GO" id="GO:0019380">
    <property type="term" value="P:3-phenylpropionate catabolic process"/>
    <property type="evidence" value="ECO:0007669"/>
    <property type="project" value="UniProtKB-UniRule"/>
</dbReference>
<dbReference type="Gene3D" id="3.90.850.10">
    <property type="entry name" value="Fumarylacetoacetase-like, C-terminal domain"/>
    <property type="match status" value="1"/>
</dbReference>
<dbReference type="HAMAP" id="MF_01655">
    <property type="entry name" value="MhpD"/>
    <property type="match status" value="1"/>
</dbReference>
<dbReference type="InterPro" id="IPR011234">
    <property type="entry name" value="Fumarylacetoacetase-like_C"/>
</dbReference>
<dbReference type="InterPro" id="IPR036663">
    <property type="entry name" value="Fumarylacetoacetase_C_sf"/>
</dbReference>
<dbReference type="InterPro" id="IPR050772">
    <property type="entry name" value="Hydratase-Decarb/MhpD_sf"/>
</dbReference>
<dbReference type="InterPro" id="IPR023793">
    <property type="entry name" value="Keto_pentenoate-hydratase"/>
</dbReference>
<dbReference type="NCBIfam" id="NF008461">
    <property type="entry name" value="PRK11342.1"/>
    <property type="match status" value="1"/>
</dbReference>
<dbReference type="PANTHER" id="PTHR30143:SF0">
    <property type="entry name" value="2-KETO-4-PENTENOATE HYDRATASE"/>
    <property type="match status" value="1"/>
</dbReference>
<dbReference type="PANTHER" id="PTHR30143">
    <property type="entry name" value="ACID HYDRATASE"/>
    <property type="match status" value="1"/>
</dbReference>
<dbReference type="Pfam" id="PF01557">
    <property type="entry name" value="FAA_hydrolase"/>
    <property type="match status" value="1"/>
</dbReference>
<dbReference type="SUPFAM" id="SSF56529">
    <property type="entry name" value="FAH"/>
    <property type="match status" value="1"/>
</dbReference>
<keyword id="KW-0058">Aromatic hydrocarbons catabolism</keyword>
<keyword id="KW-0456">Lyase</keyword>